<keyword id="KW-0030">Aminoacyl-tRNA synthetase</keyword>
<keyword id="KW-0067">ATP-binding</keyword>
<keyword id="KW-0963">Cytoplasm</keyword>
<keyword id="KW-0436">Ligase</keyword>
<keyword id="KW-0547">Nucleotide-binding</keyword>
<keyword id="KW-0648">Protein biosynthesis</keyword>
<organism>
    <name type="scientific">Shewanella sp. (strain ANA-3)</name>
    <dbReference type="NCBI Taxonomy" id="94122"/>
    <lineage>
        <taxon>Bacteria</taxon>
        <taxon>Pseudomonadati</taxon>
        <taxon>Pseudomonadota</taxon>
        <taxon>Gammaproteobacteria</taxon>
        <taxon>Alteromonadales</taxon>
        <taxon>Shewanellaceae</taxon>
        <taxon>Shewanella</taxon>
    </lineage>
</organism>
<evidence type="ECO:0000255" key="1">
    <source>
        <dbReference type="HAMAP-Rule" id="MF_01569"/>
    </source>
</evidence>
<name>SYP_SHESA</name>
<dbReference type="EC" id="6.1.1.15" evidence="1"/>
<dbReference type="EMBL" id="CP000469">
    <property type="protein sequence ID" value="ABK47632.1"/>
    <property type="molecule type" value="Genomic_DNA"/>
</dbReference>
<dbReference type="RefSeq" id="WP_011716466.1">
    <property type="nucleotide sequence ID" value="NC_008577.1"/>
</dbReference>
<dbReference type="SMR" id="A0KV13"/>
<dbReference type="STRING" id="94122.Shewana3_1398"/>
<dbReference type="KEGG" id="shn:Shewana3_1398"/>
<dbReference type="eggNOG" id="COG0442">
    <property type="taxonomic scope" value="Bacteria"/>
</dbReference>
<dbReference type="HOGENOM" id="CLU_016739_0_0_6"/>
<dbReference type="OrthoDB" id="9809052at2"/>
<dbReference type="Proteomes" id="UP000002589">
    <property type="component" value="Chromosome"/>
</dbReference>
<dbReference type="GO" id="GO:0005829">
    <property type="term" value="C:cytosol"/>
    <property type="evidence" value="ECO:0007669"/>
    <property type="project" value="TreeGrafter"/>
</dbReference>
<dbReference type="GO" id="GO:0002161">
    <property type="term" value="F:aminoacyl-tRNA deacylase activity"/>
    <property type="evidence" value="ECO:0007669"/>
    <property type="project" value="InterPro"/>
</dbReference>
<dbReference type="GO" id="GO:0005524">
    <property type="term" value="F:ATP binding"/>
    <property type="evidence" value="ECO:0007669"/>
    <property type="project" value="UniProtKB-UniRule"/>
</dbReference>
<dbReference type="GO" id="GO:0004827">
    <property type="term" value="F:proline-tRNA ligase activity"/>
    <property type="evidence" value="ECO:0007669"/>
    <property type="project" value="UniProtKB-UniRule"/>
</dbReference>
<dbReference type="GO" id="GO:0006433">
    <property type="term" value="P:prolyl-tRNA aminoacylation"/>
    <property type="evidence" value="ECO:0007669"/>
    <property type="project" value="UniProtKB-UniRule"/>
</dbReference>
<dbReference type="CDD" id="cd04334">
    <property type="entry name" value="ProRS-INS"/>
    <property type="match status" value="1"/>
</dbReference>
<dbReference type="CDD" id="cd00861">
    <property type="entry name" value="ProRS_anticodon_short"/>
    <property type="match status" value="1"/>
</dbReference>
<dbReference type="CDD" id="cd00779">
    <property type="entry name" value="ProRS_core_prok"/>
    <property type="match status" value="1"/>
</dbReference>
<dbReference type="FunFam" id="3.30.930.10:FF:000043">
    <property type="entry name" value="Proline--tRNA ligase"/>
    <property type="match status" value="1"/>
</dbReference>
<dbReference type="FunFam" id="3.30.930.10:FF:000062">
    <property type="entry name" value="Proline--tRNA ligase"/>
    <property type="match status" value="1"/>
</dbReference>
<dbReference type="FunFam" id="3.40.50.800:FF:000006">
    <property type="entry name" value="Proline--tRNA ligase"/>
    <property type="match status" value="1"/>
</dbReference>
<dbReference type="FunFam" id="3.90.960.10:FF:000001">
    <property type="entry name" value="Proline--tRNA ligase"/>
    <property type="match status" value="1"/>
</dbReference>
<dbReference type="Gene3D" id="3.40.50.800">
    <property type="entry name" value="Anticodon-binding domain"/>
    <property type="match status" value="1"/>
</dbReference>
<dbReference type="Gene3D" id="3.30.930.10">
    <property type="entry name" value="Bira Bifunctional Protein, Domain 2"/>
    <property type="match status" value="2"/>
</dbReference>
<dbReference type="Gene3D" id="3.90.960.10">
    <property type="entry name" value="YbaK/aminoacyl-tRNA synthetase-associated domain"/>
    <property type="match status" value="1"/>
</dbReference>
<dbReference type="HAMAP" id="MF_01569">
    <property type="entry name" value="Pro_tRNA_synth_type1"/>
    <property type="match status" value="1"/>
</dbReference>
<dbReference type="InterPro" id="IPR002314">
    <property type="entry name" value="aa-tRNA-synt_IIb"/>
</dbReference>
<dbReference type="InterPro" id="IPR006195">
    <property type="entry name" value="aa-tRNA-synth_II"/>
</dbReference>
<dbReference type="InterPro" id="IPR045864">
    <property type="entry name" value="aa-tRNA-synth_II/BPL/LPL"/>
</dbReference>
<dbReference type="InterPro" id="IPR004154">
    <property type="entry name" value="Anticodon-bd"/>
</dbReference>
<dbReference type="InterPro" id="IPR036621">
    <property type="entry name" value="Anticodon-bd_dom_sf"/>
</dbReference>
<dbReference type="InterPro" id="IPR002316">
    <property type="entry name" value="Pro-tRNA-ligase_IIa"/>
</dbReference>
<dbReference type="InterPro" id="IPR004500">
    <property type="entry name" value="Pro-tRNA-synth_IIa_bac-type"/>
</dbReference>
<dbReference type="InterPro" id="IPR023717">
    <property type="entry name" value="Pro-tRNA-Synthase_IIa_type1"/>
</dbReference>
<dbReference type="InterPro" id="IPR050062">
    <property type="entry name" value="Pro-tRNA_synthetase"/>
</dbReference>
<dbReference type="InterPro" id="IPR044140">
    <property type="entry name" value="ProRS_anticodon_short"/>
</dbReference>
<dbReference type="InterPro" id="IPR033730">
    <property type="entry name" value="ProRS_core_prok"/>
</dbReference>
<dbReference type="InterPro" id="IPR036754">
    <property type="entry name" value="YbaK/aa-tRNA-synt-asso_dom_sf"/>
</dbReference>
<dbReference type="InterPro" id="IPR007214">
    <property type="entry name" value="YbaK/aa-tRNA-synth-assoc-dom"/>
</dbReference>
<dbReference type="NCBIfam" id="NF006625">
    <property type="entry name" value="PRK09194.1"/>
    <property type="match status" value="1"/>
</dbReference>
<dbReference type="NCBIfam" id="TIGR00409">
    <property type="entry name" value="proS_fam_II"/>
    <property type="match status" value="1"/>
</dbReference>
<dbReference type="PANTHER" id="PTHR42753">
    <property type="entry name" value="MITOCHONDRIAL RIBOSOME PROTEIN L39/PROLYL-TRNA LIGASE FAMILY MEMBER"/>
    <property type="match status" value="1"/>
</dbReference>
<dbReference type="PANTHER" id="PTHR42753:SF2">
    <property type="entry name" value="PROLINE--TRNA LIGASE"/>
    <property type="match status" value="1"/>
</dbReference>
<dbReference type="Pfam" id="PF03129">
    <property type="entry name" value="HGTP_anticodon"/>
    <property type="match status" value="1"/>
</dbReference>
<dbReference type="Pfam" id="PF00587">
    <property type="entry name" value="tRNA-synt_2b"/>
    <property type="match status" value="1"/>
</dbReference>
<dbReference type="Pfam" id="PF04073">
    <property type="entry name" value="tRNA_edit"/>
    <property type="match status" value="1"/>
</dbReference>
<dbReference type="PIRSF" id="PIRSF001535">
    <property type="entry name" value="ProRS_1"/>
    <property type="match status" value="1"/>
</dbReference>
<dbReference type="PRINTS" id="PR01046">
    <property type="entry name" value="TRNASYNTHPRO"/>
</dbReference>
<dbReference type="SUPFAM" id="SSF52954">
    <property type="entry name" value="Class II aaRS ABD-related"/>
    <property type="match status" value="1"/>
</dbReference>
<dbReference type="SUPFAM" id="SSF55681">
    <property type="entry name" value="Class II aaRS and biotin synthetases"/>
    <property type="match status" value="1"/>
</dbReference>
<dbReference type="SUPFAM" id="SSF55826">
    <property type="entry name" value="YbaK/ProRS associated domain"/>
    <property type="match status" value="1"/>
</dbReference>
<dbReference type="PROSITE" id="PS50862">
    <property type="entry name" value="AA_TRNA_LIGASE_II"/>
    <property type="match status" value="1"/>
</dbReference>
<accession>A0KV13</accession>
<comment type="function">
    <text evidence="1">Catalyzes the attachment of proline to tRNA(Pro) in a two-step reaction: proline is first activated by ATP to form Pro-AMP and then transferred to the acceptor end of tRNA(Pro). As ProRS can inadvertently accommodate and process non-cognate amino acids such as alanine and cysteine, to avoid such errors it has two additional distinct editing activities against alanine. One activity is designated as 'pretransfer' editing and involves the tRNA(Pro)-independent hydrolysis of activated Ala-AMP. The other activity is designated 'posttransfer' editing and involves deacylation of mischarged Ala-tRNA(Pro). The misacylated Cys-tRNA(Pro) is not edited by ProRS.</text>
</comment>
<comment type="catalytic activity">
    <reaction evidence="1">
        <text>tRNA(Pro) + L-proline + ATP = L-prolyl-tRNA(Pro) + AMP + diphosphate</text>
        <dbReference type="Rhea" id="RHEA:14305"/>
        <dbReference type="Rhea" id="RHEA-COMP:9700"/>
        <dbReference type="Rhea" id="RHEA-COMP:9702"/>
        <dbReference type="ChEBI" id="CHEBI:30616"/>
        <dbReference type="ChEBI" id="CHEBI:33019"/>
        <dbReference type="ChEBI" id="CHEBI:60039"/>
        <dbReference type="ChEBI" id="CHEBI:78442"/>
        <dbReference type="ChEBI" id="CHEBI:78532"/>
        <dbReference type="ChEBI" id="CHEBI:456215"/>
        <dbReference type="EC" id="6.1.1.15"/>
    </reaction>
</comment>
<comment type="subunit">
    <text evidence="1">Homodimer.</text>
</comment>
<comment type="subcellular location">
    <subcellularLocation>
        <location evidence="1">Cytoplasm</location>
    </subcellularLocation>
</comment>
<comment type="domain">
    <text evidence="1">Consists of three domains: the N-terminal catalytic domain, the editing domain and the C-terminal anticodon-binding domain.</text>
</comment>
<comment type="similarity">
    <text evidence="1">Belongs to the class-II aminoacyl-tRNA synthetase family. ProS type 1 subfamily.</text>
</comment>
<proteinExistence type="inferred from homology"/>
<sequence length="570" mass="63137">MRVSKYLLSTQKETPANAEVISHQLMLRAGMIRRNASGLYSYLPTGLRVLRKVEAIVREEMNKAGAIEILMPMVQPADLWVETGRWDKFGPELLRFKDRHNRDFVLGPTHEEVITDLIRKEVSSYKQLPLNLYQIQTKFRDEVRPRFGVMRSREFLMKDAYSFHLDVDTMNETYEAMYQAYSNILSRMGLAFRPVLADTGSIGGSMSHEFHVLAQSGEDLIAYSTGSDYAANIEKAESPMPTEARGAATEALRLVDTPNAKTIAELVEQFGLDITKTVKTLIVKGATEEAPLVALIVRGDHELNEIKADKLDLVASPLEFAPEALIRDAIGAGPGSLGPVGLNMPVIIDHSVSVMSDFAAGANLDDKHYFGINWERDLPLAQAADIRNVVEGEPTPDGLGTYAMARGIEVGHIFQLGTNYSKSMNATVLDENGKSQVLLMGCYGVGVSRIVAAAIEQNFDDRGIVWPEAIAPFSVGILPMNMHKSHRVTDIAEQLYKDLSAVGIDVLLDDRKERPGVMFADMELIGIPHTVVIGDRNIDAGVFEYKNRRTGEKQDVPFDQIVDFLKNLQA</sequence>
<reference key="1">
    <citation type="submission" date="2006-09" db="EMBL/GenBank/DDBJ databases">
        <title>Complete sequence of chromosome 1 of Shewanella sp. ANA-3.</title>
        <authorList>
            <person name="Copeland A."/>
            <person name="Lucas S."/>
            <person name="Lapidus A."/>
            <person name="Barry K."/>
            <person name="Detter J.C."/>
            <person name="Glavina del Rio T."/>
            <person name="Hammon N."/>
            <person name="Israni S."/>
            <person name="Dalin E."/>
            <person name="Tice H."/>
            <person name="Pitluck S."/>
            <person name="Chertkov O."/>
            <person name="Brettin T."/>
            <person name="Bruce D."/>
            <person name="Han C."/>
            <person name="Tapia R."/>
            <person name="Gilna P."/>
            <person name="Schmutz J."/>
            <person name="Larimer F."/>
            <person name="Land M."/>
            <person name="Hauser L."/>
            <person name="Kyrpides N."/>
            <person name="Kim E."/>
            <person name="Newman D."/>
            <person name="Salticov C."/>
            <person name="Konstantinidis K."/>
            <person name="Klappenback J."/>
            <person name="Tiedje J."/>
            <person name="Richardson P."/>
        </authorList>
    </citation>
    <scope>NUCLEOTIDE SEQUENCE [LARGE SCALE GENOMIC DNA]</scope>
    <source>
        <strain>ANA-3</strain>
    </source>
</reference>
<gene>
    <name evidence="1" type="primary">proS</name>
    <name type="ordered locus">Shewana3_1398</name>
</gene>
<protein>
    <recommendedName>
        <fullName evidence="1">Proline--tRNA ligase</fullName>
        <ecNumber evidence="1">6.1.1.15</ecNumber>
    </recommendedName>
    <alternativeName>
        <fullName evidence="1">Prolyl-tRNA synthetase</fullName>
        <shortName evidence="1">ProRS</shortName>
    </alternativeName>
</protein>
<feature type="chain" id="PRO_0000288376" description="Proline--tRNA ligase">
    <location>
        <begin position="1"/>
        <end position="570"/>
    </location>
</feature>